<evidence type="ECO:0000255" key="1">
    <source>
        <dbReference type="HAMAP-Rule" id="MF_01321"/>
    </source>
</evidence>
<keyword id="KW-0150">Chloroplast</keyword>
<keyword id="KW-0240">DNA-directed RNA polymerase</keyword>
<keyword id="KW-0548">Nucleotidyltransferase</keyword>
<keyword id="KW-0934">Plastid</keyword>
<keyword id="KW-1185">Reference proteome</keyword>
<keyword id="KW-0804">Transcription</keyword>
<keyword id="KW-0808">Transferase</keyword>
<feature type="chain" id="PRO_0000237325" description="DNA-directed RNA polymerase subunit beta">
    <location>
        <begin position="1"/>
        <end position="1070"/>
    </location>
</feature>
<name>RPOB_GOSHI</name>
<accession>Q2L8Z9</accession>
<geneLocation type="chloroplast"/>
<organism>
    <name type="scientific">Gossypium hirsutum</name>
    <name type="common">Upland cotton</name>
    <name type="synonym">Gossypium mexicanum</name>
    <dbReference type="NCBI Taxonomy" id="3635"/>
    <lineage>
        <taxon>Eukaryota</taxon>
        <taxon>Viridiplantae</taxon>
        <taxon>Streptophyta</taxon>
        <taxon>Embryophyta</taxon>
        <taxon>Tracheophyta</taxon>
        <taxon>Spermatophyta</taxon>
        <taxon>Magnoliopsida</taxon>
        <taxon>eudicotyledons</taxon>
        <taxon>Gunneridae</taxon>
        <taxon>Pentapetalae</taxon>
        <taxon>rosids</taxon>
        <taxon>malvids</taxon>
        <taxon>Malvales</taxon>
        <taxon>Malvaceae</taxon>
        <taxon>Malvoideae</taxon>
        <taxon>Gossypium</taxon>
    </lineage>
</organism>
<comment type="function">
    <text evidence="1">DNA-dependent RNA polymerase catalyzes the transcription of DNA into RNA using the four ribonucleoside triphosphates as substrates.</text>
</comment>
<comment type="catalytic activity">
    <reaction evidence="1">
        <text>RNA(n) + a ribonucleoside 5'-triphosphate = RNA(n+1) + diphosphate</text>
        <dbReference type="Rhea" id="RHEA:21248"/>
        <dbReference type="Rhea" id="RHEA-COMP:14527"/>
        <dbReference type="Rhea" id="RHEA-COMP:17342"/>
        <dbReference type="ChEBI" id="CHEBI:33019"/>
        <dbReference type="ChEBI" id="CHEBI:61557"/>
        <dbReference type="ChEBI" id="CHEBI:140395"/>
        <dbReference type="EC" id="2.7.7.6"/>
    </reaction>
</comment>
<comment type="subunit">
    <text evidence="1">In plastids the minimal PEP RNA polymerase catalytic core is composed of four subunits: alpha, beta, beta', and beta''. When a (nuclear-encoded) sigma factor is associated with the core the holoenzyme is formed, which can initiate transcription.</text>
</comment>
<comment type="subcellular location">
    <subcellularLocation>
        <location>Plastid</location>
        <location>Chloroplast</location>
    </subcellularLocation>
</comment>
<comment type="similarity">
    <text evidence="1">Belongs to the RNA polymerase beta chain family.</text>
</comment>
<gene>
    <name evidence="1" type="primary">rpoB</name>
</gene>
<dbReference type="EC" id="2.7.7.6" evidence="1"/>
<dbReference type="EMBL" id="DQ345959">
    <property type="protein sequence ID" value="ABC73620.1"/>
    <property type="molecule type" value="Genomic_DNA"/>
</dbReference>
<dbReference type="RefSeq" id="YP_538927.1">
    <property type="nucleotide sequence ID" value="NC_007944.1"/>
</dbReference>
<dbReference type="SMR" id="Q2L8Z9"/>
<dbReference type="GeneID" id="3989197"/>
<dbReference type="KEGG" id="ghi:3989197"/>
<dbReference type="OrthoDB" id="23808at41938"/>
<dbReference type="Proteomes" id="UP000189702">
    <property type="component" value="Chloroplast Pltd"/>
</dbReference>
<dbReference type="GO" id="GO:0009507">
    <property type="term" value="C:chloroplast"/>
    <property type="evidence" value="ECO:0007669"/>
    <property type="project" value="UniProtKB-SubCell"/>
</dbReference>
<dbReference type="GO" id="GO:0000428">
    <property type="term" value="C:DNA-directed RNA polymerase complex"/>
    <property type="evidence" value="ECO:0007669"/>
    <property type="project" value="UniProtKB-KW"/>
</dbReference>
<dbReference type="GO" id="GO:0005739">
    <property type="term" value="C:mitochondrion"/>
    <property type="evidence" value="ECO:0007669"/>
    <property type="project" value="GOC"/>
</dbReference>
<dbReference type="GO" id="GO:0003677">
    <property type="term" value="F:DNA binding"/>
    <property type="evidence" value="ECO:0007669"/>
    <property type="project" value="UniProtKB-UniRule"/>
</dbReference>
<dbReference type="GO" id="GO:0003899">
    <property type="term" value="F:DNA-directed RNA polymerase activity"/>
    <property type="evidence" value="ECO:0007669"/>
    <property type="project" value="UniProtKB-UniRule"/>
</dbReference>
<dbReference type="GO" id="GO:0032549">
    <property type="term" value="F:ribonucleoside binding"/>
    <property type="evidence" value="ECO:0007669"/>
    <property type="project" value="InterPro"/>
</dbReference>
<dbReference type="GO" id="GO:0006351">
    <property type="term" value="P:DNA-templated transcription"/>
    <property type="evidence" value="ECO:0007669"/>
    <property type="project" value="UniProtKB-UniRule"/>
</dbReference>
<dbReference type="CDD" id="cd00653">
    <property type="entry name" value="RNA_pol_B_RPB2"/>
    <property type="match status" value="1"/>
</dbReference>
<dbReference type="FunFam" id="2.40.50.150:FF:000006">
    <property type="entry name" value="DNA-directed RNA polymerase subunit beta"/>
    <property type="match status" value="1"/>
</dbReference>
<dbReference type="FunFam" id="3.90.1110.10:FF:000009">
    <property type="entry name" value="DNA-directed RNA polymerase subunit beta"/>
    <property type="match status" value="1"/>
</dbReference>
<dbReference type="Gene3D" id="2.40.50.100">
    <property type="match status" value="1"/>
</dbReference>
<dbReference type="Gene3D" id="2.40.50.150">
    <property type="match status" value="1"/>
</dbReference>
<dbReference type="Gene3D" id="3.90.1100.10">
    <property type="match status" value="1"/>
</dbReference>
<dbReference type="Gene3D" id="2.30.150.10">
    <property type="entry name" value="DNA-directed RNA polymerase, beta subunit, external 1 domain"/>
    <property type="match status" value="1"/>
</dbReference>
<dbReference type="Gene3D" id="2.40.270.10">
    <property type="entry name" value="DNA-directed RNA polymerase, subunit 2, domain 6"/>
    <property type="match status" value="1"/>
</dbReference>
<dbReference type="Gene3D" id="3.90.1800.10">
    <property type="entry name" value="RNA polymerase alpha subunit dimerisation domain"/>
    <property type="match status" value="1"/>
</dbReference>
<dbReference type="Gene3D" id="3.90.1110.10">
    <property type="entry name" value="RNA polymerase Rpb2, domain 2"/>
    <property type="match status" value="1"/>
</dbReference>
<dbReference type="HAMAP" id="MF_01321">
    <property type="entry name" value="RNApol_bact_RpoB"/>
    <property type="match status" value="1"/>
</dbReference>
<dbReference type="InterPro" id="IPR042107">
    <property type="entry name" value="DNA-dir_RNA_pol_bsu_ext_1_sf"/>
</dbReference>
<dbReference type="InterPro" id="IPR015712">
    <property type="entry name" value="DNA-dir_RNA_pol_su2"/>
</dbReference>
<dbReference type="InterPro" id="IPR007120">
    <property type="entry name" value="DNA-dir_RNAP_su2_dom"/>
</dbReference>
<dbReference type="InterPro" id="IPR037033">
    <property type="entry name" value="DNA-dir_RNAP_su2_hyb_sf"/>
</dbReference>
<dbReference type="InterPro" id="IPR010243">
    <property type="entry name" value="RNA_pol_bsu_bac"/>
</dbReference>
<dbReference type="InterPro" id="IPR007121">
    <property type="entry name" value="RNA_pol_bsu_CS"/>
</dbReference>
<dbReference type="InterPro" id="IPR007642">
    <property type="entry name" value="RNA_pol_Rpb2_2"/>
</dbReference>
<dbReference type="InterPro" id="IPR037034">
    <property type="entry name" value="RNA_pol_Rpb2_2_sf"/>
</dbReference>
<dbReference type="InterPro" id="IPR007645">
    <property type="entry name" value="RNA_pol_Rpb2_3"/>
</dbReference>
<dbReference type="InterPro" id="IPR007641">
    <property type="entry name" value="RNA_pol_Rpb2_7"/>
</dbReference>
<dbReference type="InterPro" id="IPR014724">
    <property type="entry name" value="RNA_pol_RPB2_OB-fold"/>
</dbReference>
<dbReference type="NCBIfam" id="NF001616">
    <property type="entry name" value="PRK00405.1"/>
    <property type="match status" value="1"/>
</dbReference>
<dbReference type="PANTHER" id="PTHR20856">
    <property type="entry name" value="DNA-DIRECTED RNA POLYMERASE I SUBUNIT 2"/>
    <property type="match status" value="1"/>
</dbReference>
<dbReference type="Pfam" id="PF04561">
    <property type="entry name" value="RNA_pol_Rpb2_2"/>
    <property type="match status" value="1"/>
</dbReference>
<dbReference type="Pfam" id="PF04565">
    <property type="entry name" value="RNA_pol_Rpb2_3"/>
    <property type="match status" value="1"/>
</dbReference>
<dbReference type="Pfam" id="PF00562">
    <property type="entry name" value="RNA_pol_Rpb2_6"/>
    <property type="match status" value="1"/>
</dbReference>
<dbReference type="Pfam" id="PF04560">
    <property type="entry name" value="RNA_pol_Rpb2_7"/>
    <property type="match status" value="1"/>
</dbReference>
<dbReference type="SUPFAM" id="SSF64484">
    <property type="entry name" value="beta and beta-prime subunits of DNA dependent RNA-polymerase"/>
    <property type="match status" value="1"/>
</dbReference>
<dbReference type="PROSITE" id="PS01166">
    <property type="entry name" value="RNA_POL_BETA"/>
    <property type="match status" value="1"/>
</dbReference>
<reference key="1">
    <citation type="journal article" date="2006" name="BMC Genomics">
        <title>The complete chloroplast genome sequence of Gossypium hirsutum: organization and phylogenetic relationships to other angiosperms.</title>
        <authorList>
            <person name="Lee S.-B."/>
            <person name="Kaittanis C."/>
            <person name="Jansen R.K."/>
            <person name="Hostetler J.B."/>
            <person name="Tallon L.J."/>
            <person name="Town C.D."/>
            <person name="Daniell H."/>
        </authorList>
    </citation>
    <scope>NUCLEOTIDE SEQUENCE [LARGE SCALE GENOMIC DNA]</scope>
    <source>
        <strain>cv. Coker 310FR</strain>
    </source>
</reference>
<proteinExistence type="inferred from homology"/>
<sequence length="1070" mass="120559">MLGDENGEMSTIPGLNQIQFEGFCGFMDRGLTEELYKFPKIEDTEQEIEFQLFVETYQLVEPLIKERDAVYESLTYSSELYVSAGLIWKTSKDMQEQTIFIGNIPLMNSLGTSIVNGIYRIVINQILQSPGIYYRSELDHNGISVYTGTIISDWGGRLELEIDRKARIWARVSRKQKISILVLSSAMGSNLREILENVCYPEIFLSFLTDKEKKKIGSKENAILEFYQQFSCVGGDPVFSESLCKELQKKFFQQRCELGRIGRRNMNQRLNLNIPQNNTFLLPRDILAAADRLIGMKFGMGPLDDMNHLKNKRIRSVADLLQDQFGLALVRLENVVRGTICGAIRHKLIPTPQNLVTSTPLTTTYESFFGLHPLSQVLDRTNPLTQIVHGRKLSYLGPGGLTGRTANFRIRDIHPSHYGRICPIDTSEGINVGLIGSLAIHARIGHWGSLESPFYKIFERSKKAQMLYLSPSRDEYYMVAAGNSLALNQGIQEEQVVPARYRQEFLTIAWEQVHLRSIFPFQYFSIGASLIPFIEHNDANRALMSSNMQRQAVPLSRSEKCIVGTGLERQVALDSGVPAIADHEGKIISTDTDKIILSGNGDALGIPLVMYQRSNKNTCMHQTARVRRGKCIKKGQILADGAATVGGELALGKNVLVAYMPWEGYNFEDAVLISERLVYEDIYTSFHIRKYEIQTHVTSQGPERITNEIPHLEAHLLRNLDKNGIVMLGSWVETGDILVGKLTPQVAKESSYAPEDRLLRAILGIQVSTSKETCLKLPIGGRGRVIDVRWVQKKGGSSYNPETIRVYISQKREIKVGDKVAGRHGNKGIISKILPRQDMPYLQDGRPVDMVFNPLGVPSRMNVGQLFECSLGLAGSLLDRHYRIAPFDERYEQEASRKLVFSELYQASKQTANPWVFEPEYPGKSRIFDGRTGGPFEQPVIIGKPYILKLIHQVDDKIHGRSSGHYALVTQQPLRGRSKQGGQRVGEMEVWALEGFGVAHILQEMLTYKSDHIRARQEVLGTTIIGGTIPKPEDAPESFRLLVRELRSLALELNHFLVSEKNFQINRKEA</sequence>
<protein>
    <recommendedName>
        <fullName evidence="1">DNA-directed RNA polymerase subunit beta</fullName>
        <ecNumber evidence="1">2.7.7.6</ecNumber>
    </recommendedName>
    <alternativeName>
        <fullName evidence="1">PEP</fullName>
    </alternativeName>
    <alternativeName>
        <fullName evidence="1">Plastid-encoded RNA polymerase subunit beta</fullName>
        <shortName evidence="1">RNA polymerase subunit beta</shortName>
    </alternativeName>
</protein>